<reference key="1">
    <citation type="submission" date="2007-07" db="EMBL/GenBank/DDBJ databases">
        <title>Complete sequence of chromosome of Shewanella baltica OS185.</title>
        <authorList>
            <consortium name="US DOE Joint Genome Institute"/>
            <person name="Copeland A."/>
            <person name="Lucas S."/>
            <person name="Lapidus A."/>
            <person name="Barry K."/>
            <person name="Glavina del Rio T."/>
            <person name="Dalin E."/>
            <person name="Tice H."/>
            <person name="Pitluck S."/>
            <person name="Sims D."/>
            <person name="Brettin T."/>
            <person name="Bruce D."/>
            <person name="Detter J.C."/>
            <person name="Han C."/>
            <person name="Schmutz J."/>
            <person name="Larimer F."/>
            <person name="Land M."/>
            <person name="Hauser L."/>
            <person name="Kyrpides N."/>
            <person name="Mikhailova N."/>
            <person name="Brettar I."/>
            <person name="Rodrigues J."/>
            <person name="Konstantinidis K."/>
            <person name="Tiedje J."/>
            <person name="Richardson P."/>
        </authorList>
    </citation>
    <scope>NUCLEOTIDE SEQUENCE [LARGE SCALE GENOMIC DNA]</scope>
    <source>
        <strain>OS185</strain>
    </source>
</reference>
<protein>
    <recommendedName>
        <fullName evidence="1">tRNA-cytidine(32) 2-sulfurtransferase</fullName>
        <ecNumber evidence="1">2.8.1.-</ecNumber>
    </recommendedName>
    <alternativeName>
        <fullName evidence="1">Two-thiocytidine biosynthesis protein A</fullName>
    </alternativeName>
    <alternativeName>
        <fullName evidence="1">tRNA 2-thiocytidine biosynthesis protein TtcA</fullName>
    </alternativeName>
</protein>
<keyword id="KW-0004">4Fe-4S</keyword>
<keyword id="KW-0067">ATP-binding</keyword>
<keyword id="KW-0963">Cytoplasm</keyword>
<keyword id="KW-0408">Iron</keyword>
<keyword id="KW-0411">Iron-sulfur</keyword>
<keyword id="KW-0460">Magnesium</keyword>
<keyword id="KW-0479">Metal-binding</keyword>
<keyword id="KW-0547">Nucleotide-binding</keyword>
<keyword id="KW-0694">RNA-binding</keyword>
<keyword id="KW-0808">Transferase</keyword>
<keyword id="KW-0819">tRNA processing</keyword>
<keyword id="KW-0820">tRNA-binding</keyword>
<name>TTCA_SHEB8</name>
<organism>
    <name type="scientific">Shewanella baltica (strain OS185)</name>
    <dbReference type="NCBI Taxonomy" id="402882"/>
    <lineage>
        <taxon>Bacteria</taxon>
        <taxon>Pseudomonadati</taxon>
        <taxon>Pseudomonadota</taxon>
        <taxon>Gammaproteobacteria</taxon>
        <taxon>Alteromonadales</taxon>
        <taxon>Shewanellaceae</taxon>
        <taxon>Shewanella</taxon>
    </lineage>
</organism>
<accession>A6WNB3</accession>
<feature type="chain" id="PRO_0000348833" description="tRNA-cytidine(32) 2-sulfurtransferase">
    <location>
        <begin position="1"/>
        <end position="310"/>
    </location>
</feature>
<feature type="short sequence motif" description="PP-loop motif" evidence="1">
    <location>
        <begin position="45"/>
        <end position="50"/>
    </location>
</feature>
<feature type="binding site" evidence="1">
    <location>
        <position position="120"/>
    </location>
    <ligand>
        <name>[4Fe-4S] cluster</name>
        <dbReference type="ChEBI" id="CHEBI:49883"/>
    </ligand>
</feature>
<feature type="binding site" evidence="1">
    <location>
        <position position="123"/>
    </location>
    <ligand>
        <name>[4Fe-4S] cluster</name>
        <dbReference type="ChEBI" id="CHEBI:49883"/>
    </ligand>
</feature>
<feature type="binding site" evidence="1">
    <location>
        <position position="211"/>
    </location>
    <ligand>
        <name>[4Fe-4S] cluster</name>
        <dbReference type="ChEBI" id="CHEBI:49883"/>
    </ligand>
</feature>
<gene>
    <name evidence="1" type="primary">ttcA</name>
    <name type="ordered locus">Shew185_2160</name>
</gene>
<dbReference type="EC" id="2.8.1.-" evidence="1"/>
<dbReference type="EMBL" id="CP000753">
    <property type="protein sequence ID" value="ABS08302.1"/>
    <property type="status" value="ALT_INIT"/>
    <property type="molecule type" value="Genomic_DNA"/>
</dbReference>
<dbReference type="RefSeq" id="WP_012089202.1">
    <property type="nucleotide sequence ID" value="NC_009665.1"/>
</dbReference>
<dbReference type="SMR" id="A6WNB3"/>
<dbReference type="KEGG" id="sbm:Shew185_2160"/>
<dbReference type="HOGENOM" id="CLU_026481_0_0_6"/>
<dbReference type="GO" id="GO:0005737">
    <property type="term" value="C:cytoplasm"/>
    <property type="evidence" value="ECO:0007669"/>
    <property type="project" value="UniProtKB-SubCell"/>
</dbReference>
<dbReference type="GO" id="GO:0051539">
    <property type="term" value="F:4 iron, 4 sulfur cluster binding"/>
    <property type="evidence" value="ECO:0007669"/>
    <property type="project" value="UniProtKB-UniRule"/>
</dbReference>
<dbReference type="GO" id="GO:0005524">
    <property type="term" value="F:ATP binding"/>
    <property type="evidence" value="ECO:0007669"/>
    <property type="project" value="UniProtKB-UniRule"/>
</dbReference>
<dbReference type="GO" id="GO:0000287">
    <property type="term" value="F:magnesium ion binding"/>
    <property type="evidence" value="ECO:0007669"/>
    <property type="project" value="UniProtKB-UniRule"/>
</dbReference>
<dbReference type="GO" id="GO:0016783">
    <property type="term" value="F:sulfurtransferase activity"/>
    <property type="evidence" value="ECO:0007669"/>
    <property type="project" value="UniProtKB-UniRule"/>
</dbReference>
<dbReference type="GO" id="GO:0000049">
    <property type="term" value="F:tRNA binding"/>
    <property type="evidence" value="ECO:0007669"/>
    <property type="project" value="UniProtKB-KW"/>
</dbReference>
<dbReference type="GO" id="GO:0034227">
    <property type="term" value="P:tRNA thio-modification"/>
    <property type="evidence" value="ECO:0007669"/>
    <property type="project" value="UniProtKB-UniRule"/>
</dbReference>
<dbReference type="CDD" id="cd24138">
    <property type="entry name" value="TtcA-like"/>
    <property type="match status" value="1"/>
</dbReference>
<dbReference type="Gene3D" id="3.40.50.620">
    <property type="entry name" value="HUPs"/>
    <property type="match status" value="1"/>
</dbReference>
<dbReference type="HAMAP" id="MF_01850">
    <property type="entry name" value="TtcA"/>
    <property type="match status" value="1"/>
</dbReference>
<dbReference type="InterPro" id="IPR014729">
    <property type="entry name" value="Rossmann-like_a/b/a_fold"/>
</dbReference>
<dbReference type="InterPro" id="IPR011063">
    <property type="entry name" value="TilS/TtcA_N"/>
</dbReference>
<dbReference type="InterPro" id="IPR012089">
    <property type="entry name" value="tRNA_Cyd_32_2_STrfase"/>
</dbReference>
<dbReference type="InterPro" id="IPR035107">
    <property type="entry name" value="tRNA_thiolation_TtcA_Ctu1"/>
</dbReference>
<dbReference type="NCBIfam" id="NF007972">
    <property type="entry name" value="PRK10696.1"/>
    <property type="match status" value="1"/>
</dbReference>
<dbReference type="PANTHER" id="PTHR43686:SF1">
    <property type="entry name" value="AMINOTRAN_5 DOMAIN-CONTAINING PROTEIN"/>
    <property type="match status" value="1"/>
</dbReference>
<dbReference type="PANTHER" id="PTHR43686">
    <property type="entry name" value="SULFURTRANSFERASE-RELATED"/>
    <property type="match status" value="1"/>
</dbReference>
<dbReference type="Pfam" id="PF01171">
    <property type="entry name" value="ATP_bind_3"/>
    <property type="match status" value="1"/>
</dbReference>
<dbReference type="PIRSF" id="PIRSF004976">
    <property type="entry name" value="ATPase_YdaO"/>
    <property type="match status" value="1"/>
</dbReference>
<dbReference type="SUPFAM" id="SSF52402">
    <property type="entry name" value="Adenine nucleotide alpha hydrolases-like"/>
    <property type="match status" value="1"/>
</dbReference>
<proteinExistence type="inferred from homology"/>
<evidence type="ECO:0000255" key="1">
    <source>
        <dbReference type="HAMAP-Rule" id="MF_01850"/>
    </source>
</evidence>
<evidence type="ECO:0000305" key="2"/>
<sequence length="310" mass="35121">MSEELSKKHTTRLNKLQKRLRREVGSAIADYNMIEDGDKIMCCLSGGKDSYAMLDILMNLQQRAPIQFEIIAVNLDQKQPGFPEHVLPAYLDKLNVPYHILEKDTYSIVKDKIPEGKTTCSLCSRLRRGTLYGFAQRIGATKIALGHHRDDIIETLFLNMFFGGKMKAMPPKLLSDDGANVVIRPLAYCREKDLEEYANLREFPIIPCNLCGSQENLKRAAVKDMLNQWDRQYPGRIETIFTAMQNTAPSQGVDREQFDFVSLTRDPNAPMRGDVAEANLPAFDFLDIANSGRIDLDAAKRIDIVNTYEV</sequence>
<comment type="function">
    <text evidence="1">Catalyzes the ATP-dependent 2-thiolation of cytidine in position 32 of tRNA, to form 2-thiocytidine (s(2)C32). The sulfur atoms are provided by the cysteine/cysteine desulfurase (IscS) system.</text>
</comment>
<comment type="catalytic activity">
    <reaction evidence="1">
        <text>cytidine(32) in tRNA + S-sulfanyl-L-cysteinyl-[cysteine desulfurase] + AH2 + ATP = 2-thiocytidine(32) in tRNA + L-cysteinyl-[cysteine desulfurase] + A + AMP + diphosphate + H(+)</text>
        <dbReference type="Rhea" id="RHEA:57048"/>
        <dbReference type="Rhea" id="RHEA-COMP:10288"/>
        <dbReference type="Rhea" id="RHEA-COMP:12157"/>
        <dbReference type="Rhea" id="RHEA-COMP:12158"/>
        <dbReference type="Rhea" id="RHEA-COMP:14821"/>
        <dbReference type="ChEBI" id="CHEBI:13193"/>
        <dbReference type="ChEBI" id="CHEBI:15378"/>
        <dbReference type="ChEBI" id="CHEBI:17499"/>
        <dbReference type="ChEBI" id="CHEBI:29950"/>
        <dbReference type="ChEBI" id="CHEBI:30616"/>
        <dbReference type="ChEBI" id="CHEBI:33019"/>
        <dbReference type="ChEBI" id="CHEBI:61963"/>
        <dbReference type="ChEBI" id="CHEBI:82748"/>
        <dbReference type="ChEBI" id="CHEBI:141453"/>
        <dbReference type="ChEBI" id="CHEBI:456215"/>
    </reaction>
    <physiologicalReaction direction="left-to-right" evidence="1">
        <dbReference type="Rhea" id="RHEA:57049"/>
    </physiologicalReaction>
</comment>
<comment type="cofactor">
    <cofactor evidence="1">
        <name>Mg(2+)</name>
        <dbReference type="ChEBI" id="CHEBI:18420"/>
    </cofactor>
</comment>
<comment type="cofactor">
    <cofactor evidence="1">
        <name>[4Fe-4S] cluster</name>
        <dbReference type="ChEBI" id="CHEBI:49883"/>
    </cofactor>
    <text evidence="1">Binds 1 [4Fe-4S] cluster per subunit. The cluster is chelated by three Cys residues, the fourth Fe has a free coordination site that may bind a sulfur atom transferred from the persulfide of IscS.</text>
</comment>
<comment type="pathway">
    <text evidence="1">tRNA modification.</text>
</comment>
<comment type="subunit">
    <text evidence="1">Homodimer.</text>
</comment>
<comment type="subcellular location">
    <subcellularLocation>
        <location evidence="1">Cytoplasm</location>
    </subcellularLocation>
</comment>
<comment type="miscellaneous">
    <text evidence="1">The thiolation reaction likely consists of two steps: a first activation step by ATP to form an adenylated intermediate of the target base of tRNA, and a second nucleophilic substitution step of the sulfur (S) atom supplied by the hydrosulfide attached to the Fe-S cluster.</text>
</comment>
<comment type="similarity">
    <text evidence="1">Belongs to the TtcA family.</text>
</comment>
<comment type="sequence caution" evidence="2">
    <conflict type="erroneous initiation">
        <sequence resource="EMBL-CDS" id="ABS08302"/>
    </conflict>
    <text>Extended N-terminus.</text>
</comment>